<evidence type="ECO:0000250" key="1"/>
<evidence type="ECO:0000250" key="2">
    <source>
        <dbReference type="UniProtKB" id="Q9Y6R0"/>
    </source>
</evidence>
<evidence type="ECO:0000255" key="3">
    <source>
        <dbReference type="PROSITE-ProRule" id="PRU00148"/>
    </source>
</evidence>
<evidence type="ECO:0000256" key="4">
    <source>
        <dbReference type="SAM" id="MobiDB-lite"/>
    </source>
</evidence>
<evidence type="ECO:0000269" key="5">
    <source>
    </source>
</evidence>
<evidence type="ECO:0000269" key="6">
    <source>
    </source>
</evidence>
<evidence type="ECO:0007744" key="7">
    <source>
    </source>
</evidence>
<protein>
    <recommendedName>
        <fullName>Numb-like protein</fullName>
    </recommendedName>
</protein>
<feature type="chain" id="PRO_0000393007" description="Numb-like protein">
    <location>
        <begin position="1"/>
        <end position="614"/>
    </location>
</feature>
<feature type="domain" description="PID" evidence="3">
    <location>
        <begin position="74"/>
        <end position="223"/>
    </location>
</feature>
<feature type="region of interest" description="Disordered" evidence="4">
    <location>
        <begin position="1"/>
        <end position="68"/>
    </location>
</feature>
<feature type="region of interest" description="Disordered" evidence="4">
    <location>
        <begin position="223"/>
        <end position="283"/>
    </location>
</feature>
<feature type="region of interest" description="Disordered" evidence="4">
    <location>
        <begin position="371"/>
        <end position="420"/>
    </location>
</feature>
<feature type="region of interest" description="Disordered" evidence="4">
    <location>
        <begin position="448"/>
        <end position="468"/>
    </location>
</feature>
<feature type="region of interest" description="Disordered" evidence="4">
    <location>
        <begin position="539"/>
        <end position="614"/>
    </location>
</feature>
<feature type="compositionally biased region" description="Basic and acidic residues" evidence="4">
    <location>
        <begin position="233"/>
        <end position="245"/>
    </location>
</feature>
<feature type="compositionally biased region" description="Low complexity" evidence="4">
    <location>
        <begin position="246"/>
        <end position="260"/>
    </location>
</feature>
<feature type="compositionally biased region" description="Low complexity" evidence="4">
    <location>
        <begin position="371"/>
        <end position="390"/>
    </location>
</feature>
<feature type="compositionally biased region" description="Basic and acidic residues" evidence="4">
    <location>
        <begin position="409"/>
        <end position="418"/>
    </location>
</feature>
<feature type="compositionally biased region" description="Pro residues" evidence="4">
    <location>
        <begin position="563"/>
        <end position="578"/>
    </location>
</feature>
<feature type="modified residue" description="Phosphoserine" evidence="2">
    <location>
        <position position="224"/>
    </location>
</feature>
<feature type="modified residue" description="Phosphoserine" evidence="2">
    <location>
        <position position="228"/>
    </location>
</feature>
<feature type="modified residue" description="Phosphoserine" evidence="2">
    <location>
        <position position="263"/>
    </location>
</feature>
<feature type="modified residue" description="Phosphothreonine" evidence="2">
    <location>
        <position position="279"/>
    </location>
</feature>
<feature type="modified residue" description="Phosphoserine" evidence="7">
    <location>
        <position position="411"/>
    </location>
</feature>
<organism>
    <name type="scientific">Rattus norvegicus</name>
    <name type="common">Rat</name>
    <dbReference type="NCBI Taxonomy" id="10116"/>
    <lineage>
        <taxon>Eukaryota</taxon>
        <taxon>Metazoa</taxon>
        <taxon>Chordata</taxon>
        <taxon>Craniata</taxon>
        <taxon>Vertebrata</taxon>
        <taxon>Euteleostomi</taxon>
        <taxon>Mammalia</taxon>
        <taxon>Eutheria</taxon>
        <taxon>Euarchontoglires</taxon>
        <taxon>Glires</taxon>
        <taxon>Rodentia</taxon>
        <taxon>Myomorpha</taxon>
        <taxon>Muroidea</taxon>
        <taxon>Muridae</taxon>
        <taxon>Murinae</taxon>
        <taxon>Rattus</taxon>
    </lineage>
</organism>
<name>NUMBL_RAT</name>
<proteinExistence type="evidence at protein level"/>
<sequence>MSRSAAASGGPRRPDQHLPPAPCGASGPPETFRTESDGAGTMNKLRQSLRRRKPAYVPEASRPHQWQADEDAVRKGTCSFPVRYLGHVEVEESRGMHVCEDAVKKLKAMGRKSVKSVLWVSADGLRVVDDKTKDLLVDQTIEKVSFCAPDRNLDKAFSYICRDGTTRRWICHCFLALKDSGERLSHAVGCAFAACLERKQRREKECGVTAAFDASRTSFAREGSFRLSGGGRPAEREAGDKKKAEAAAAPAVAPGPAQPGHVSPTPATTSPGEKGEAGTPVAAGTTAAAIPRRHAPLEQLVRQGSFRGFPALSQKNSPFKRQLSLRLNELPSTLQRRTDFQVKGTVPEMEPPGTGDSDGISALCTQISSSFASAGAPVPGPPSATTGTSAWGEPSVPAATAFQPGHKRTPSEAERWLEEVSQVAKAQQQQQQQQQQQQQQQQQQQQQQQQQATSVPPMPTMAPTLQPFSTPVGPFDTAAAQVAVFLPPTHMQPPFVPAYPGLGYPPMPRVPVVGITPSQMVANAFCSAAQLQPQPATLLGKAGAFPPPTAPSAPGGQARPRPNGAPWPPEPAPAPAPELDPFEAQWAALEGKPAVEKPSNPFSGDLQKTFEIEL</sequence>
<reference key="1">
    <citation type="submission" date="2005-09" db="EMBL/GenBank/DDBJ databases">
        <authorList>
            <person name="Mural R.J."/>
            <person name="Adams M.D."/>
            <person name="Myers E.W."/>
            <person name="Smith H.O."/>
            <person name="Venter J.C."/>
        </authorList>
    </citation>
    <scope>NUCLEOTIDE SEQUENCE [LARGE SCALE GENOMIC DNA]</scope>
    <source>
        <strain>Brown Norway</strain>
    </source>
</reference>
<reference key="2">
    <citation type="journal article" date="2004" name="Genome Res.">
        <title>The status, quality, and expansion of the NIH full-length cDNA project: the Mammalian Gene Collection (MGC).</title>
        <authorList>
            <consortium name="The MGC Project Team"/>
        </authorList>
    </citation>
    <scope>NUCLEOTIDE SEQUENCE [LARGE SCALE MRNA]</scope>
    <source>
        <tissue>Heart</tissue>
    </source>
</reference>
<reference key="3">
    <citation type="journal article" date="2008" name="Cell. Signal.">
        <title>NUMBL interacts with TAB2 and inhibits TNFalpha and IL-1beta-induced NF-kappaB activation.</title>
        <authorList>
            <person name="Ma Q."/>
            <person name="Zhou L."/>
            <person name="Shi H."/>
            <person name="Huo K."/>
        </authorList>
    </citation>
    <scope>INTERACTION WITH NUMBL</scope>
</reference>
<reference key="4">
    <citation type="journal article" date="2010" name="Biochem. Biophys. Res. Commun.">
        <title>NUMBL interacts with TRAF6 and promotes the degradation of TRAF6.</title>
        <authorList>
            <person name="Zhou L."/>
            <person name="Ma Q."/>
            <person name="Shi H."/>
            <person name="Huo K."/>
        </authorList>
    </citation>
    <scope>INTERACTION WITH NUMBL</scope>
</reference>
<reference key="5">
    <citation type="journal article" date="2012" name="Nat. Commun.">
        <title>Quantitative maps of protein phosphorylation sites across 14 different rat organs and tissues.</title>
        <authorList>
            <person name="Lundby A."/>
            <person name="Secher A."/>
            <person name="Lage K."/>
            <person name="Nordsborg N.B."/>
            <person name="Dmytriyev A."/>
            <person name="Lundby C."/>
            <person name="Olsen J.V."/>
        </authorList>
    </citation>
    <scope>PHOSPHORYLATION [LARGE SCALE ANALYSIS] AT SER-411</scope>
    <scope>IDENTIFICATION BY MASS SPECTROMETRY [LARGE SCALE ANALYSIS]</scope>
</reference>
<accession>A1L1I3</accession>
<comment type="function">
    <text evidence="1">Plays a role in the process of neurogenesis. Required throughout embryonic neurogenesis to maintain neural progenitor cells, also called radial glial cells (RGCs), by allowing their daughter cells to choose progenitor over neuronal cell fate. Not required for the proliferation of neural progenitor cells before the onset of embryonic neurogenesis. Also required postnatally in the subventricular zone (SVZ) neurogenesis by regulating SVZ neuroblasts survival and ependymal wall integrity. Negative regulator of NF-kappa-B signaling pathway. The inhibition of NF-kappa-B activation is mediated at least in part, by preventing MAP3K7IP2 to interact with polyubiquitin chains of TRAF6 and RIPK1 and by stimulating the 'Lys-48'-linked polyubiquitination and degradation of TRAF6 in cortical neurons (By similarity).</text>
</comment>
<comment type="subunit">
    <text evidence="1 5 6">Associates with EPS15 and NOTCH1 (By similarity). Interacts (via PTB domain) with MAP3K7IP2 (via C-terminal). Interacts (via C-terminal) with TRAF6 (via TRAF domains).</text>
</comment>
<comment type="subcellular location">
    <subcellularLocation>
        <location evidence="1">Cytoplasm</location>
    </subcellularLocation>
    <text evidence="1">Symmetrically distributed throughout the cytoplasm in non dividing neuroblasts of the CNS.</text>
</comment>
<comment type="domain">
    <text evidence="1">The PTB domain is necessary for the inhibition of MAP3K7IP2-mediated activation of NF-kappa-B.</text>
</comment>
<dbReference type="EMBL" id="CH473979">
    <property type="protein sequence ID" value="EDM07964.1"/>
    <property type="molecule type" value="Genomic_DNA"/>
</dbReference>
<dbReference type="EMBL" id="BC129073">
    <property type="protein sequence ID" value="AAI29074.1"/>
    <property type="molecule type" value="mRNA"/>
</dbReference>
<dbReference type="RefSeq" id="NP_001385626.1">
    <property type="nucleotide sequence ID" value="NM_001398697.1"/>
</dbReference>
<dbReference type="RefSeq" id="XP_006228629.1">
    <property type="nucleotide sequence ID" value="XM_006228567.3"/>
</dbReference>
<dbReference type="SMR" id="A1L1I3"/>
<dbReference type="BioGRID" id="253944">
    <property type="interactions" value="3"/>
</dbReference>
<dbReference type="FunCoup" id="A1L1I3">
    <property type="interactions" value="2189"/>
</dbReference>
<dbReference type="IntAct" id="A1L1I3">
    <property type="interactions" value="1"/>
</dbReference>
<dbReference type="MINT" id="A1L1I3"/>
<dbReference type="STRING" id="10116.ENSRNOP00000074945"/>
<dbReference type="GlyGen" id="A1L1I3">
    <property type="glycosylation" value="2 sites"/>
</dbReference>
<dbReference type="iPTMnet" id="A1L1I3"/>
<dbReference type="PhosphoSitePlus" id="A1L1I3"/>
<dbReference type="jPOST" id="A1L1I3"/>
<dbReference type="PaxDb" id="10116-ENSRNOP00000054039"/>
<dbReference type="PeptideAtlas" id="A1L1I3"/>
<dbReference type="Ensembl" id="ENSRNOT00000057213.4">
    <property type="protein sequence ID" value="ENSRNOP00000054039.2"/>
    <property type="gene ID" value="ENSRNOG00000020867.8"/>
</dbReference>
<dbReference type="GeneID" id="292732"/>
<dbReference type="UCSC" id="RGD:1307579">
    <property type="organism name" value="rat"/>
</dbReference>
<dbReference type="AGR" id="RGD:1307579"/>
<dbReference type="RGD" id="1307579">
    <property type="gene designation" value="Numbl"/>
</dbReference>
<dbReference type="eggNOG" id="KOG3537">
    <property type="taxonomic scope" value="Eukaryota"/>
</dbReference>
<dbReference type="GeneTree" id="ENSGT00940000160957"/>
<dbReference type="HOGENOM" id="CLU_031797_1_1_1"/>
<dbReference type="InParanoid" id="A1L1I3"/>
<dbReference type="PhylomeDB" id="A1L1I3"/>
<dbReference type="TreeFam" id="TF314159"/>
<dbReference type="PRO" id="PR:A1L1I3"/>
<dbReference type="Proteomes" id="UP000002494">
    <property type="component" value="Chromosome 1"/>
</dbReference>
<dbReference type="Proteomes" id="UP000234681">
    <property type="component" value="Chromosome 1"/>
</dbReference>
<dbReference type="Bgee" id="ENSRNOG00000020867">
    <property type="expression patterns" value="Expressed in frontal cortex and 18 other cell types or tissues"/>
</dbReference>
<dbReference type="ExpressionAtlas" id="A1L1I3">
    <property type="expression patterns" value="baseline and differential"/>
</dbReference>
<dbReference type="GO" id="GO:0005737">
    <property type="term" value="C:cytoplasm"/>
    <property type="evidence" value="ECO:0000266"/>
    <property type="project" value="RGD"/>
</dbReference>
<dbReference type="GO" id="GO:0098978">
    <property type="term" value="C:glutamatergic synapse"/>
    <property type="evidence" value="ECO:0000314"/>
    <property type="project" value="SynGO"/>
</dbReference>
<dbReference type="GO" id="GO:0034332">
    <property type="term" value="P:adherens junction organization"/>
    <property type="evidence" value="ECO:0000266"/>
    <property type="project" value="RGD"/>
</dbReference>
<dbReference type="GO" id="GO:0007409">
    <property type="term" value="P:axonogenesis"/>
    <property type="evidence" value="ECO:0000266"/>
    <property type="project" value="RGD"/>
</dbReference>
<dbReference type="GO" id="GO:0019221">
    <property type="term" value="P:cytokine-mediated signaling pathway"/>
    <property type="evidence" value="ECO:0000250"/>
    <property type="project" value="UniProtKB"/>
</dbReference>
<dbReference type="GO" id="GO:0030900">
    <property type="term" value="P:forebrain development"/>
    <property type="evidence" value="ECO:0000266"/>
    <property type="project" value="RGD"/>
</dbReference>
<dbReference type="GO" id="GO:0021670">
    <property type="term" value="P:lateral ventricle development"/>
    <property type="evidence" value="ECO:0000250"/>
    <property type="project" value="UniProtKB"/>
</dbReference>
<dbReference type="GO" id="GO:0007399">
    <property type="term" value="P:nervous system development"/>
    <property type="evidence" value="ECO:0000266"/>
    <property type="project" value="RGD"/>
</dbReference>
<dbReference type="GO" id="GO:0021849">
    <property type="term" value="P:neuroblast division in subventricular zone"/>
    <property type="evidence" value="ECO:0000250"/>
    <property type="project" value="UniProtKB"/>
</dbReference>
<dbReference type="GO" id="GO:0007405">
    <property type="term" value="P:neuroblast proliferation"/>
    <property type="evidence" value="ECO:0000266"/>
    <property type="project" value="RGD"/>
</dbReference>
<dbReference type="GO" id="GO:0050775">
    <property type="term" value="P:positive regulation of dendrite morphogenesis"/>
    <property type="evidence" value="ECO:0000315"/>
    <property type="project" value="RGD"/>
</dbReference>
<dbReference type="GO" id="GO:0050769">
    <property type="term" value="P:positive regulation of neurogenesis"/>
    <property type="evidence" value="ECO:0000250"/>
    <property type="project" value="UniProtKB"/>
</dbReference>
<dbReference type="GO" id="GO:0019538">
    <property type="term" value="P:protein metabolic process"/>
    <property type="evidence" value="ECO:0000250"/>
    <property type="project" value="UniProtKB"/>
</dbReference>
<dbReference type="GO" id="GO:0150052">
    <property type="term" value="P:regulation of postsynapse assembly"/>
    <property type="evidence" value="ECO:0000314"/>
    <property type="project" value="SynGO"/>
</dbReference>
<dbReference type="CDD" id="cd01268">
    <property type="entry name" value="PTB_Numb"/>
    <property type="match status" value="1"/>
</dbReference>
<dbReference type="FunFam" id="2.30.29.30:FF:000031">
    <property type="entry name" value="protein numb isoform X1"/>
    <property type="match status" value="1"/>
</dbReference>
<dbReference type="Gene3D" id="2.30.29.30">
    <property type="entry name" value="Pleckstrin-homology domain (PH domain)/Phosphotyrosine-binding domain (PTB)"/>
    <property type="match status" value="1"/>
</dbReference>
<dbReference type="InterPro" id="IPR016698">
    <property type="entry name" value="Numb/numb-like"/>
</dbReference>
<dbReference type="InterPro" id="IPR010449">
    <property type="entry name" value="Numb_domain"/>
</dbReference>
<dbReference type="InterPro" id="IPR011993">
    <property type="entry name" value="PH-like_dom_sf"/>
</dbReference>
<dbReference type="InterPro" id="IPR006020">
    <property type="entry name" value="PTB/PI_dom"/>
</dbReference>
<dbReference type="PANTHER" id="PTHR47368">
    <property type="entry name" value="NUMB"/>
    <property type="match status" value="1"/>
</dbReference>
<dbReference type="PANTHER" id="PTHR47368:SF4">
    <property type="entry name" value="NUMB-LIKE PROTEIN"/>
    <property type="match status" value="1"/>
</dbReference>
<dbReference type="Pfam" id="PF06311">
    <property type="entry name" value="NumbF"/>
    <property type="match status" value="1"/>
</dbReference>
<dbReference type="Pfam" id="PF00640">
    <property type="entry name" value="PID"/>
    <property type="match status" value="1"/>
</dbReference>
<dbReference type="PIRSF" id="PIRSF017607">
    <property type="entry name" value="Numb/numb-like"/>
    <property type="match status" value="1"/>
</dbReference>
<dbReference type="SMART" id="SM00462">
    <property type="entry name" value="PTB"/>
    <property type="match status" value="1"/>
</dbReference>
<dbReference type="SUPFAM" id="SSF50729">
    <property type="entry name" value="PH domain-like"/>
    <property type="match status" value="1"/>
</dbReference>
<dbReference type="PROSITE" id="PS01179">
    <property type="entry name" value="PID"/>
    <property type="match status" value="1"/>
</dbReference>
<keyword id="KW-0963">Cytoplasm</keyword>
<keyword id="KW-0217">Developmental protein</keyword>
<keyword id="KW-0524">Neurogenesis</keyword>
<keyword id="KW-0597">Phosphoprotein</keyword>
<keyword id="KW-1185">Reference proteome</keyword>
<keyword id="KW-0833">Ubl conjugation pathway</keyword>
<gene>
    <name type="primary">Numbl</name>
    <name type="synonym">Nbl</name>
</gene>